<sequence>MGKTADNHGPVRSETAREGRENQVYSPVTGARLVAGCICLTPDKKQVLMITSSAHKKRWIVPKGGVEKDEPNYETTAQRETWEEAGCIGKIVANLGTVEDMRPPKDWNKDIKQFENSRKDSEVAKHPPRTEFHFYELEIENLLDKFPECHKRHRKLYSYTEAKQNLIDAKRPELLEALNRSAIIKDDK</sequence>
<proteinExistence type="evidence at protein level"/>
<accession>Q99321</accession>
<accession>D6W2M1</accession>
<reference key="1">
    <citation type="journal article" date="1996" name="Yeast">
        <title>Analysis of a 22,956 bp region on the right arm of Saccharomyces cerevisiae chromosome XV.</title>
        <authorList>
            <person name="Madania A."/>
            <person name="Poch O."/>
            <person name="Tarassov I.A."/>
            <person name="Winsor B."/>
            <person name="Martin R.P."/>
        </authorList>
    </citation>
    <scope>NUCLEOTIDE SEQUENCE [GENOMIC DNA]</scope>
    <source>
        <strain>S288c / FY1678</strain>
    </source>
</reference>
<reference key="2">
    <citation type="journal article" date="1997" name="Nature">
        <title>The nucleotide sequence of Saccharomyces cerevisiae chromosome XV.</title>
        <authorList>
            <person name="Dujon B."/>
            <person name="Albermann K."/>
            <person name="Aldea M."/>
            <person name="Alexandraki D."/>
            <person name="Ansorge W."/>
            <person name="Arino J."/>
            <person name="Benes V."/>
            <person name="Bohn C."/>
            <person name="Bolotin-Fukuhara M."/>
            <person name="Bordonne R."/>
            <person name="Boyer J."/>
            <person name="Camasses A."/>
            <person name="Casamayor A."/>
            <person name="Casas C."/>
            <person name="Cheret G."/>
            <person name="Cziepluch C."/>
            <person name="Daignan-Fornier B."/>
            <person name="Dang V.-D."/>
            <person name="de Haan M."/>
            <person name="Delius H."/>
            <person name="Durand P."/>
            <person name="Fairhead C."/>
            <person name="Feldmann H."/>
            <person name="Gaillon L."/>
            <person name="Galisson F."/>
            <person name="Gamo F.-J."/>
            <person name="Gancedo C."/>
            <person name="Goffeau A."/>
            <person name="Goulding S.E."/>
            <person name="Grivell L.A."/>
            <person name="Habbig B."/>
            <person name="Hand N.J."/>
            <person name="Hani J."/>
            <person name="Hattenhorst U."/>
            <person name="Hebling U."/>
            <person name="Hernando Y."/>
            <person name="Herrero E."/>
            <person name="Heumann K."/>
            <person name="Hiesel R."/>
            <person name="Hilger F."/>
            <person name="Hofmann B."/>
            <person name="Hollenberg C.P."/>
            <person name="Hughes B."/>
            <person name="Jauniaux J.-C."/>
            <person name="Kalogeropoulos A."/>
            <person name="Katsoulou C."/>
            <person name="Kordes E."/>
            <person name="Lafuente M.J."/>
            <person name="Landt O."/>
            <person name="Louis E.J."/>
            <person name="Maarse A.C."/>
            <person name="Madania A."/>
            <person name="Mannhaupt G."/>
            <person name="Marck C."/>
            <person name="Martin R.P."/>
            <person name="Mewes H.-W."/>
            <person name="Michaux G."/>
            <person name="Paces V."/>
            <person name="Parle-McDermott A.G."/>
            <person name="Pearson B.M."/>
            <person name="Perrin A."/>
            <person name="Pettersson B."/>
            <person name="Poch O."/>
            <person name="Pohl T.M."/>
            <person name="Poirey R."/>
            <person name="Portetelle D."/>
            <person name="Pujol A."/>
            <person name="Purnelle B."/>
            <person name="Ramezani Rad M."/>
            <person name="Rechmann S."/>
            <person name="Schwager C."/>
            <person name="Schweizer M."/>
            <person name="Sor F."/>
            <person name="Sterky F."/>
            <person name="Tarassov I.A."/>
            <person name="Teodoru C."/>
            <person name="Tettelin H."/>
            <person name="Thierry A."/>
            <person name="Tobiasch E."/>
            <person name="Tzermia M."/>
            <person name="Uhlen M."/>
            <person name="Unseld M."/>
            <person name="Valens M."/>
            <person name="Vandenbol M."/>
            <person name="Vetter I."/>
            <person name="Vlcek C."/>
            <person name="Voet M."/>
            <person name="Volckaert G."/>
            <person name="Voss H."/>
            <person name="Wambutt R."/>
            <person name="Wedler H."/>
            <person name="Wiemann S."/>
            <person name="Winsor B."/>
            <person name="Wolfe K.H."/>
            <person name="Zollner A."/>
            <person name="Zumstein E."/>
            <person name="Kleine K."/>
        </authorList>
    </citation>
    <scope>NUCLEOTIDE SEQUENCE [LARGE SCALE GENOMIC DNA]</scope>
    <source>
        <strain>ATCC 204508 / S288c</strain>
    </source>
</reference>
<reference key="3">
    <citation type="journal article" date="2014" name="G3 (Bethesda)">
        <title>The reference genome sequence of Saccharomyces cerevisiae: Then and now.</title>
        <authorList>
            <person name="Engel S.R."/>
            <person name="Dietrich F.S."/>
            <person name="Fisk D.G."/>
            <person name="Binkley G."/>
            <person name="Balakrishnan R."/>
            <person name="Costanzo M.C."/>
            <person name="Dwight S.S."/>
            <person name="Hitz B.C."/>
            <person name="Karra K."/>
            <person name="Nash R.S."/>
            <person name="Weng S."/>
            <person name="Wong E.D."/>
            <person name="Lloyd P."/>
            <person name="Skrzypek M.S."/>
            <person name="Miyasato S.R."/>
            <person name="Simison M."/>
            <person name="Cherry J.M."/>
        </authorList>
    </citation>
    <scope>GENOME REANNOTATION</scope>
    <source>
        <strain>ATCC 204508 / S288c</strain>
    </source>
</reference>
<reference key="4">
    <citation type="journal article" date="2007" name="Genome Res.">
        <title>Approaching a complete repository of sequence-verified protein-encoding clones for Saccharomyces cerevisiae.</title>
        <authorList>
            <person name="Hu Y."/>
            <person name="Rolfs A."/>
            <person name="Bhullar B."/>
            <person name="Murthy T.V.S."/>
            <person name="Zhu C."/>
            <person name="Berger M.F."/>
            <person name="Camargo A.A."/>
            <person name="Kelley F."/>
            <person name="McCarron S."/>
            <person name="Jepson D."/>
            <person name="Richardson A."/>
            <person name="Raphael J."/>
            <person name="Moreira D."/>
            <person name="Taycher E."/>
            <person name="Zuo D."/>
            <person name="Mohr S."/>
            <person name="Kane M.F."/>
            <person name="Williamson J."/>
            <person name="Simpson A.J.G."/>
            <person name="Bulyk M.L."/>
            <person name="Harlow E."/>
            <person name="Marsischky G."/>
            <person name="Kolodner R.D."/>
            <person name="LaBaer J."/>
        </authorList>
    </citation>
    <scope>NUCLEOTIDE SEQUENCE [GENOMIC DNA]</scope>
    <source>
        <strain>ATCC 204508 / S288c</strain>
    </source>
</reference>
<reference key="5">
    <citation type="journal article" date="1999" name="J. Biol. Chem.">
        <title>The Saccharomyces cerevisiae YOR163w gene encodes a diadenosine 5', 5'''-P1,P6-hexaphosphate (Ap6A) hydrolase member of the MutT motif (Nudix hydrolase) family.</title>
        <authorList>
            <person name="Cartwright J.L."/>
            <person name="McLennan A.G."/>
        </authorList>
    </citation>
    <scope>PROTEIN SEQUENCE OF 2-13</scope>
    <scope>MASS SPECTROMETRY</scope>
    <scope>FUNCTION</scope>
    <scope>CATALYTIC ACTIVITY</scope>
    <scope>BIOPHYSICOCHEMICAL PROPERTIES</scope>
    <scope>COFACTOR</scope>
</reference>
<reference key="6">
    <citation type="journal article" date="1999" name="J. Biol. Chem.">
        <title>The diadenosine hexaphosphate hydrolases from Schizosaccharomyces pombe and Saccharomyces cerevisiae are homologues of the human diphosphoinositol polyphosphate phosphohydrolase. Overlapping substrate specificities in a MutT-type protein.</title>
        <authorList>
            <person name="Safrany S.T."/>
            <person name="Ingram S.W."/>
            <person name="Cartwright J.L."/>
            <person name="Falck J.R."/>
            <person name="McLennan A.G."/>
            <person name="Barnes L.D."/>
            <person name="Shears S.B."/>
        </authorList>
    </citation>
    <scope>CATALYTIC ACTIVITY</scope>
    <scope>BIOPHYSICOCHEMICAL PROPERTIES</scope>
</reference>
<reference key="7">
    <citation type="journal article" date="2003" name="Nature">
        <title>Global analysis of protein localization in budding yeast.</title>
        <authorList>
            <person name="Huh W.-K."/>
            <person name="Falvo J.V."/>
            <person name="Gerke L.C."/>
            <person name="Carroll A.S."/>
            <person name="Howson R.W."/>
            <person name="Weissman J.S."/>
            <person name="O'Shea E.K."/>
        </authorList>
    </citation>
    <scope>SUBCELLULAR LOCATION [LARGE SCALE ANALYSIS]</scope>
</reference>
<reference key="8">
    <citation type="journal article" date="2003" name="Nature">
        <title>Global analysis of protein expression in yeast.</title>
        <authorList>
            <person name="Ghaemmaghami S."/>
            <person name="Huh W.-K."/>
            <person name="Bower K."/>
            <person name="Howson R.W."/>
            <person name="Belle A."/>
            <person name="Dephoure N."/>
            <person name="O'Shea E.K."/>
            <person name="Weissman J.S."/>
        </authorList>
    </citation>
    <scope>LEVEL OF PROTEIN EXPRESSION [LARGE SCALE ANALYSIS]</scope>
</reference>
<reference key="9">
    <citation type="journal article" date="2008" name="Mol. Cell. Proteomics">
        <title>A multidimensional chromatography technology for in-depth phosphoproteome analysis.</title>
        <authorList>
            <person name="Albuquerque C.P."/>
            <person name="Smolka M.B."/>
            <person name="Payne S.H."/>
            <person name="Bafna V."/>
            <person name="Eng J."/>
            <person name="Zhou H."/>
        </authorList>
    </citation>
    <scope>IDENTIFICATION BY MASS SPECTROMETRY [LARGE SCALE ANALYSIS]</scope>
</reference>
<reference key="10">
    <citation type="journal article" date="2012" name="Proc. Natl. Acad. Sci. U.S.A.">
        <title>N-terminal acetylome analyses and functional insights of the N-terminal acetyltransferase NatB.</title>
        <authorList>
            <person name="Van Damme P."/>
            <person name="Lasa M."/>
            <person name="Polevoda B."/>
            <person name="Gazquez C."/>
            <person name="Elosegui-Artola A."/>
            <person name="Kim D.S."/>
            <person name="De Juan-Pardo E."/>
            <person name="Demeyer K."/>
            <person name="Hole K."/>
            <person name="Larrea E."/>
            <person name="Timmerman E."/>
            <person name="Prieto J."/>
            <person name="Arnesen T."/>
            <person name="Sherman F."/>
            <person name="Gevaert K."/>
            <person name="Aldabe R."/>
        </authorList>
    </citation>
    <scope>IDENTIFICATION BY MASS SPECTROMETRY [LARGE SCALE ANALYSIS]</scope>
</reference>
<reference key="11">
    <citation type="journal article" date="2019" name="Biochimie">
        <title>Ppn2 endopolyphosphatase overexpressed in Saccharomyces cerevisiae: Comparison with Ppn1, Ppx1, and Ddp1 polyphosphatases.</title>
        <authorList>
            <person name="Andreeva N."/>
            <person name="Ledova L."/>
            <person name="Ryazanova L."/>
            <person name="Tomashevsky A."/>
            <person name="Kulakovskaya T."/>
            <person name="Eldarov M."/>
        </authorList>
    </citation>
    <scope>FUNCTION</scope>
    <scope>CATALYTIC ACTIVITY</scope>
    <scope>BIOPHYSICOCHEMICAL PROPERTIES</scope>
    <scope>COFACTOR</scope>
</reference>
<reference key="12">
    <citation type="journal article" date="2021" name="Sci. Adv.">
        <title>Multiple substrate recognition by yeast diadenosine and diphosphoinositol polyphosphate phosphohydrolase through phosphate clamping.</title>
        <authorList>
            <person name="Marquez-Monino M.A."/>
            <person name="Ortega-Garcia R."/>
            <person name="Shipton M.L."/>
            <person name="Franco-Echevarria E."/>
            <person name="Riley A.M."/>
            <person name="Sanz-Aparicio J."/>
            <person name="Potter B.V.L."/>
            <person name="Gonzalez B."/>
        </authorList>
    </citation>
    <scope>X-RAY CRYSTALLOGRAPHY (1.60 ANGSTROMS) IN COMPLEX WITH SUBSTRATE AND SUBSTRATE ANALOGS</scope>
</reference>
<comment type="function">
    <text evidence="4 5 8">May eliminate potentially toxic dinucleoside polyphosphates during sporulation. Most active against diadenosine 5',5'''-P1,P6-hexaphosphate (Ap6A). Can also hydrolyze diadenosine 5',5'''-P1,P5-pentaphosphate (Ap5A), adenosine 5'-pentaphosphate (p5A), and adenosine 5'-tetraphosphate (p4A) are also substrates, but not diadenosine 5',5'''-P1,P4-tetraphosphate (Ap4A) or other dinucleotides, mononucleotides, nucleotide sugars, or nucleotide alcohols. Also cleaves a beta-phosphate from the diphosphate groups in PP-InsP5 (diphosphoinositol pentakisphosphate) and [PP]2-InsP4 (bisdiphosphoinositol tetrakisphosphate) (PubMed:10085096, PubMed:10419486). Also has endopolyphosphatase activity (PubMed:31175919).</text>
</comment>
<comment type="catalytic activity">
    <reaction evidence="5">
        <text>diphospho-myo-inositol polyphosphate + H2O = myo-inositol polyphosphate + phosphate.</text>
        <dbReference type="EC" id="3.6.1.52"/>
    </reaction>
</comment>
<comment type="catalytic activity">
    <reaction evidence="4 5">
        <text>P(1),P(6)-bis(5'-adenosyl) hexaphosphate + H2O = adenosine 5'-pentaphosphate + AMP + 2 H(+)</text>
        <dbReference type="Rhea" id="RHEA:32047"/>
        <dbReference type="ChEBI" id="CHEBI:15377"/>
        <dbReference type="ChEBI" id="CHEBI:15378"/>
        <dbReference type="ChEBI" id="CHEBI:63740"/>
        <dbReference type="ChEBI" id="CHEBI:63813"/>
        <dbReference type="ChEBI" id="CHEBI:456215"/>
        <dbReference type="EC" id="3.6.1.60"/>
    </reaction>
</comment>
<comment type="catalytic activity">
    <reaction evidence="4 5">
        <text>P(1),P(5)-bis(5'-adenosyl) pentaphosphate + H2O = adenosine 5'-tetraphosphate + AMP + 2 H(+)</text>
        <dbReference type="Rhea" id="RHEA:32051"/>
        <dbReference type="ChEBI" id="CHEBI:15377"/>
        <dbReference type="ChEBI" id="CHEBI:15378"/>
        <dbReference type="ChEBI" id="CHEBI:58450"/>
        <dbReference type="ChEBI" id="CHEBI:62041"/>
        <dbReference type="ChEBI" id="CHEBI:456215"/>
        <dbReference type="EC" id="3.6.1.60"/>
    </reaction>
</comment>
<comment type="catalytic activity">
    <reaction evidence="8">
        <text>[phosphate](n+1) + n H2O = (n+1) phosphate + n H(+)</text>
        <dbReference type="Rhea" id="RHEA:22452"/>
        <dbReference type="Rhea" id="RHEA-COMP:14280"/>
        <dbReference type="ChEBI" id="CHEBI:15377"/>
        <dbReference type="ChEBI" id="CHEBI:15378"/>
        <dbReference type="ChEBI" id="CHEBI:16838"/>
        <dbReference type="ChEBI" id="CHEBI:43474"/>
        <dbReference type="EC" id="3.6.1.10"/>
    </reaction>
    <physiologicalReaction direction="left-to-right" evidence="8">
        <dbReference type="Rhea" id="RHEA:22453"/>
    </physiologicalReaction>
</comment>
<comment type="cofactor">
    <cofactor evidence="4 8 9">
        <name>Mg(2+)</name>
        <dbReference type="ChEBI" id="CHEBI:18420"/>
    </cofactor>
    <cofactor evidence="4">
        <name>Mn(2+)</name>
        <dbReference type="ChEBI" id="CHEBI:29035"/>
    </cofactor>
    <cofactor evidence="8">
        <name>Zn(2+)</name>
        <dbReference type="ChEBI" id="CHEBI:29105"/>
    </cofactor>
    <text evidence="1 11">Binds 3 Zn(2+) ions per subunit.</text>
</comment>
<comment type="biophysicochemical properties">
    <kinetics>
        <KM evidence="4">56 uM for Ap6A</KM>
        <KM evidence="4">70 uM for Ap5A</KM>
        <KM evidence="4">34 uM for p5A</KM>
        <KM evidence="4">50 uM for p4A</KM>
        <KM evidence="5">31 nM for PP-InsP5</KM>
        <Vmax evidence="8">0.05 umol/min/mg enzyme with polyP(208) as substrate for the exopolyphosphatase reaction</Vmax>
    </kinetics>
</comment>
<comment type="subcellular location">
    <subcellularLocation>
        <location evidence="6">Cytoplasm</location>
    </subcellularLocation>
    <subcellularLocation>
        <location evidence="6">Nucleus</location>
    </subcellularLocation>
</comment>
<comment type="mass spectrometry"/>
<comment type="miscellaneous">
    <text evidence="7">Present with 3340 molecules/cell in log phase SD medium.</text>
</comment>
<comment type="similarity">
    <text evidence="10">Belongs to the Nudix hydrolase family. DIPP subfamily.</text>
</comment>
<name>DDP1_YEAST</name>
<gene>
    <name type="primary">DDP1</name>
    <name type="ordered locus">YOR163W</name>
    <name type="ORF">O3575</name>
</gene>
<protein>
    <recommendedName>
        <fullName>Diphosphoinositol polyphosphate phosphohydrolase DDP1</fullName>
        <ecNumber>3.6.1.52</ecNumber>
    </recommendedName>
    <alternativeName>
        <fullName>Diadenosine 5',5'''-P1,P6-hexaphosphate hydrolase</fullName>
        <shortName>Ap6A hydrolase</shortName>
    </alternativeName>
    <alternativeName>
        <fullName>Diadenosine and diphosphoinositol polyphosphate phosphohydrolase 1</fullName>
    </alternativeName>
    <alternativeName>
        <fullName>Diadenosine hexaphosphate hydrolase (AMP-forming)</fullName>
        <ecNumber>3.6.1.60</ecNumber>
    </alternativeName>
    <alternativeName>
        <fullName>Endopolyphosphatase</fullName>
        <ecNumber evidence="8">3.6.1.10</ecNumber>
    </alternativeName>
</protein>
<feature type="initiator methionine" description="Removed" evidence="4">
    <location>
        <position position="1"/>
    </location>
</feature>
<feature type="chain" id="PRO_0000057067" description="Diphosphoinositol polyphosphate phosphohydrolase DDP1">
    <location>
        <begin position="2"/>
        <end position="188"/>
    </location>
</feature>
<feature type="domain" description="Nudix hydrolase" evidence="2">
    <location>
        <begin position="30"/>
        <end position="179"/>
    </location>
</feature>
<feature type="region of interest" description="Disordered" evidence="3">
    <location>
        <begin position="1"/>
        <end position="23"/>
    </location>
</feature>
<feature type="short sequence motif" description="Nudix box">
    <location>
        <begin position="65"/>
        <end position="86"/>
    </location>
</feature>
<feature type="compositionally biased region" description="Basic and acidic residues" evidence="3">
    <location>
        <begin position="1"/>
        <end position="21"/>
    </location>
</feature>
<feature type="binding site" evidence="9 12">
    <location>
        <position position="32"/>
    </location>
    <ligand>
        <name>1D-myo-inositol hexakisphosphate</name>
        <dbReference type="ChEBI" id="CHEBI:58130"/>
    </ligand>
</feature>
<feature type="binding site" evidence="9 13 14">
    <location>
        <position position="32"/>
    </location>
    <ligand>
        <name>5-diphospho-1D-myo-inositol 1,2,3,4,6-pentakisphosphate</name>
        <dbReference type="ChEBI" id="CHEBI:58628"/>
    </ligand>
</feature>
<feature type="binding site" evidence="9 16">
    <location>
        <position position="32"/>
    </location>
    <ligand>
        <name>P(1),P(5)-bis(5'-adenosyl) pentaphosphate</name>
        <dbReference type="ChEBI" id="CHEBI:62041"/>
    </ligand>
</feature>
<feature type="binding site" evidence="9 12">
    <location>
        <position position="52"/>
    </location>
    <ligand>
        <name>1D-myo-inositol hexakisphosphate</name>
        <dbReference type="ChEBI" id="CHEBI:58130"/>
    </ligand>
</feature>
<feature type="binding site" evidence="9 13 14">
    <location>
        <position position="52"/>
    </location>
    <ligand>
        <name>5-diphospho-1D-myo-inositol 1,2,3,4,6-pentakisphosphate</name>
        <dbReference type="ChEBI" id="CHEBI:58628"/>
    </ligand>
</feature>
<feature type="binding site" evidence="9 16">
    <location>
        <position position="52"/>
    </location>
    <ligand>
        <name>P(1),P(5)-bis(5'-adenosyl) pentaphosphate</name>
        <dbReference type="ChEBI" id="CHEBI:62041"/>
    </ligand>
</feature>
<feature type="binding site" evidence="9 12">
    <location>
        <position position="53"/>
    </location>
    <ligand>
        <name>1D-myo-inositol hexakisphosphate</name>
        <dbReference type="ChEBI" id="CHEBI:58130"/>
    </ligand>
</feature>
<feature type="binding site" evidence="9 13 14">
    <location>
        <position position="53"/>
    </location>
    <ligand>
        <name>5-diphospho-1D-myo-inositol 1,2,3,4,6-pentakisphosphate</name>
        <dbReference type="ChEBI" id="CHEBI:58628"/>
    </ligand>
</feature>
<feature type="binding site" evidence="9 16">
    <location>
        <position position="53"/>
    </location>
    <ligand>
        <name>P(1),P(5)-bis(5'-adenosyl) pentaphosphate</name>
        <dbReference type="ChEBI" id="CHEBI:62041"/>
    </ligand>
</feature>
<feature type="binding site" evidence="9 12">
    <location>
        <position position="63"/>
    </location>
    <ligand>
        <name>1D-myo-inositol hexakisphosphate</name>
        <dbReference type="ChEBI" id="CHEBI:58130"/>
    </ligand>
</feature>
<feature type="binding site" evidence="9 13 14">
    <location>
        <position position="63"/>
    </location>
    <ligand>
        <name>5-diphospho-1D-myo-inositol 1,2,3,4,6-pentakisphosphate</name>
        <dbReference type="ChEBI" id="CHEBI:58628"/>
    </ligand>
</feature>
<feature type="binding site" evidence="9 15">
    <location>
        <position position="63"/>
    </location>
    <ligand>
        <name>Mg(2+)</name>
        <dbReference type="ChEBI" id="CHEBI:18420"/>
        <label>1</label>
    </ligand>
</feature>
<feature type="binding site" evidence="9 16">
    <location>
        <position position="63"/>
    </location>
    <ligand>
        <name>P(1),P(5)-bis(5'-adenosyl) pentaphosphate</name>
        <dbReference type="ChEBI" id="CHEBI:62041"/>
    </ligand>
</feature>
<feature type="binding site" evidence="1 11">
    <location>
        <position position="80"/>
    </location>
    <ligand>
        <name>Mg(2+)</name>
        <dbReference type="ChEBI" id="CHEBI:18420"/>
        <label>2</label>
    </ligand>
</feature>
<feature type="binding site" evidence="9 15">
    <location>
        <position position="80"/>
    </location>
    <ligand>
        <name>Mg(2+)</name>
        <dbReference type="ChEBI" id="CHEBI:18420"/>
        <label>3</label>
    </ligand>
</feature>
<feature type="binding site" evidence="9 14 15">
    <location>
        <position position="84"/>
    </location>
    <ligand>
        <name>Mg(2+)</name>
        <dbReference type="ChEBI" id="CHEBI:18420"/>
        <label>1</label>
    </ligand>
</feature>
<feature type="binding site" evidence="9 17">
    <location>
        <position position="100"/>
    </location>
    <ligand>
        <name>P(1),P(5)-bis(5'-adenosyl) pentaphosphate</name>
        <dbReference type="ChEBI" id="CHEBI:62041"/>
    </ligand>
</feature>
<feature type="binding site" evidence="9 12">
    <location>
        <position position="102"/>
    </location>
    <ligand>
        <name>1D-myo-inositol hexakisphosphate</name>
        <dbReference type="ChEBI" id="CHEBI:58130"/>
    </ligand>
</feature>
<feature type="binding site" evidence="9 13">
    <location>
        <position position="102"/>
    </location>
    <ligand>
        <name>5-diphospho-1D-myo-inositol 1,2,3,4,6-pentakisphosphate</name>
        <dbReference type="ChEBI" id="CHEBI:58628"/>
    </ligand>
</feature>
<feature type="binding site" evidence="9 12">
    <location>
        <position position="129"/>
    </location>
    <ligand>
        <name>1D-myo-inositol hexakisphosphate</name>
        <dbReference type="ChEBI" id="CHEBI:58130"/>
    </ligand>
</feature>
<feature type="binding site" evidence="9 12">
    <location>
        <position position="152"/>
    </location>
    <ligand>
        <name>1D-myo-inositol hexakisphosphate</name>
        <dbReference type="ChEBI" id="CHEBI:58130"/>
    </ligand>
</feature>
<feature type="binding site" evidence="9 13 14">
    <location>
        <position position="152"/>
    </location>
    <ligand>
        <name>5-diphospho-1D-myo-inositol 1,2,3,4,6-pentakisphosphate</name>
        <dbReference type="ChEBI" id="CHEBI:58628"/>
    </ligand>
</feature>
<feature type="binding site" evidence="9 16">
    <location>
        <position position="152"/>
    </location>
    <ligand>
        <name>P(1),P(5)-bis(5'-adenosyl) pentaphosphate</name>
        <dbReference type="ChEBI" id="CHEBI:62041"/>
    </ligand>
</feature>
<feature type="binding site" evidence="9 12">
    <location>
        <position position="171"/>
    </location>
    <ligand>
        <name>1D-myo-inositol hexakisphosphate</name>
        <dbReference type="ChEBI" id="CHEBI:58130"/>
    </ligand>
</feature>
<feature type="binding site" evidence="9 13">
    <location>
        <position position="171"/>
    </location>
    <ligand>
        <name>5-diphospho-1D-myo-inositol 1,2,3,4,6-pentakisphosphate</name>
        <dbReference type="ChEBI" id="CHEBI:58628"/>
    </ligand>
</feature>
<feature type="binding site" evidence="9 16">
    <location>
        <position position="171"/>
    </location>
    <ligand>
        <name>P(1),P(5)-bis(5'-adenosyl) pentaphosphate</name>
        <dbReference type="ChEBI" id="CHEBI:62041"/>
    </ligand>
</feature>
<feature type="binding site" evidence="9 16">
    <location>
        <position position="173"/>
    </location>
    <ligand>
        <name>P(1),P(5)-bis(5'-adenosyl) pentaphosphate</name>
        <dbReference type="ChEBI" id="CHEBI:62041"/>
    </ligand>
</feature>
<feature type="turn" evidence="19">
    <location>
        <begin position="27"/>
        <end position="29"/>
    </location>
</feature>
<feature type="strand" evidence="19">
    <location>
        <begin position="32"/>
        <end position="40"/>
    </location>
</feature>
<feature type="strand" evidence="19">
    <location>
        <begin position="44"/>
        <end position="51"/>
    </location>
</feature>
<feature type="strand" evidence="18">
    <location>
        <begin position="53"/>
        <end position="55"/>
    </location>
</feature>
<feature type="strand" evidence="19">
    <location>
        <begin position="63"/>
        <end position="65"/>
    </location>
</feature>
<feature type="helix" evidence="19">
    <location>
        <begin position="73"/>
        <end position="85"/>
    </location>
</feature>
<feature type="strand" evidence="19">
    <location>
        <begin position="87"/>
        <end position="100"/>
    </location>
</feature>
<feature type="helix" evidence="19">
    <location>
        <begin position="107"/>
        <end position="109"/>
    </location>
</feature>
<feature type="strand" evidence="19">
    <location>
        <begin position="114"/>
        <end position="117"/>
    </location>
</feature>
<feature type="strand" evidence="19">
    <location>
        <begin position="120"/>
        <end position="123"/>
    </location>
</feature>
<feature type="strand" evidence="19">
    <location>
        <begin position="129"/>
        <end position="142"/>
    </location>
</feature>
<feature type="turn" evidence="19">
    <location>
        <begin position="147"/>
        <end position="151"/>
    </location>
</feature>
<feature type="strand" evidence="19">
    <location>
        <begin position="154"/>
        <end position="158"/>
    </location>
</feature>
<feature type="helix" evidence="19">
    <location>
        <begin position="159"/>
        <end position="168"/>
    </location>
</feature>
<feature type="helix" evidence="19">
    <location>
        <begin position="172"/>
        <end position="180"/>
    </location>
</feature>
<dbReference type="EC" id="3.6.1.52"/>
<dbReference type="EC" id="3.6.1.60"/>
<dbReference type="EC" id="3.6.1.10" evidence="8"/>
<dbReference type="EMBL" id="Z75071">
    <property type="protein sequence ID" value="CAA99369.1"/>
    <property type="molecule type" value="Genomic_DNA"/>
</dbReference>
<dbReference type="EMBL" id="U55021">
    <property type="protein sequence ID" value="AAB47410.1"/>
    <property type="molecule type" value="Genomic_DNA"/>
</dbReference>
<dbReference type="EMBL" id="AY558436">
    <property type="protein sequence ID" value="AAS56762.1"/>
    <property type="molecule type" value="Genomic_DNA"/>
</dbReference>
<dbReference type="EMBL" id="BK006948">
    <property type="protein sequence ID" value="DAA10937.1"/>
    <property type="molecule type" value="Genomic_DNA"/>
</dbReference>
<dbReference type="PIR" id="S67051">
    <property type="entry name" value="S67051"/>
</dbReference>
<dbReference type="RefSeq" id="NP_014806.1">
    <property type="nucleotide sequence ID" value="NM_001183582.1"/>
</dbReference>
<dbReference type="PDB" id="7AUI">
    <property type="method" value="X-ray"/>
    <property type="resolution" value="1.98 A"/>
    <property type="chains" value="A=1-188"/>
</dbReference>
<dbReference type="PDB" id="7AUJ">
    <property type="method" value="X-ray"/>
    <property type="resolution" value="2.10 A"/>
    <property type="chains" value="A=1-188"/>
</dbReference>
<dbReference type="PDB" id="7AUK">
    <property type="method" value="X-ray"/>
    <property type="resolution" value="2.00 A"/>
    <property type="chains" value="A=1-188"/>
</dbReference>
<dbReference type="PDB" id="7AUL">
    <property type="method" value="X-ray"/>
    <property type="resolution" value="1.85 A"/>
    <property type="chains" value="A=1-188"/>
</dbReference>
<dbReference type="PDB" id="7AUM">
    <property type="method" value="X-ray"/>
    <property type="resolution" value="2.07 A"/>
    <property type="chains" value="A=1-188"/>
</dbReference>
<dbReference type="PDB" id="7AUN">
    <property type="method" value="X-ray"/>
    <property type="resolution" value="1.95 A"/>
    <property type="chains" value="A=1-188"/>
</dbReference>
<dbReference type="PDB" id="7AUO">
    <property type="method" value="X-ray"/>
    <property type="resolution" value="2.65 A"/>
    <property type="chains" value="A=1-188"/>
</dbReference>
<dbReference type="PDB" id="7AUP">
    <property type="method" value="X-ray"/>
    <property type="resolution" value="1.85 A"/>
    <property type="chains" value="A=1-188"/>
</dbReference>
<dbReference type="PDB" id="7AUQ">
    <property type="method" value="X-ray"/>
    <property type="resolution" value="2.25 A"/>
    <property type="chains" value="A=1-188"/>
</dbReference>
<dbReference type="PDB" id="7AUR">
    <property type="method" value="X-ray"/>
    <property type="resolution" value="1.65 A"/>
    <property type="chains" value="A=1-188"/>
</dbReference>
<dbReference type="PDB" id="7AUS">
    <property type="method" value="X-ray"/>
    <property type="resolution" value="1.75 A"/>
    <property type="chains" value="A=1-188"/>
</dbReference>
<dbReference type="PDB" id="7AUT">
    <property type="method" value="X-ray"/>
    <property type="resolution" value="1.60 A"/>
    <property type="chains" value="A=1-188"/>
</dbReference>
<dbReference type="PDB" id="7AUU">
    <property type="method" value="X-ray"/>
    <property type="resolution" value="2.45 A"/>
    <property type="chains" value="A=1-103, A=127-188"/>
</dbReference>
<dbReference type="PDBsum" id="7AUI"/>
<dbReference type="PDBsum" id="7AUJ"/>
<dbReference type="PDBsum" id="7AUK"/>
<dbReference type="PDBsum" id="7AUL"/>
<dbReference type="PDBsum" id="7AUM"/>
<dbReference type="PDBsum" id="7AUN"/>
<dbReference type="PDBsum" id="7AUO"/>
<dbReference type="PDBsum" id="7AUP"/>
<dbReference type="PDBsum" id="7AUQ"/>
<dbReference type="PDBsum" id="7AUR"/>
<dbReference type="PDBsum" id="7AUS"/>
<dbReference type="PDBsum" id="7AUT"/>
<dbReference type="PDBsum" id="7AUU"/>
<dbReference type="SMR" id="Q99321"/>
<dbReference type="BioGRID" id="34559">
    <property type="interactions" value="78"/>
</dbReference>
<dbReference type="FunCoup" id="Q99321">
    <property type="interactions" value="317"/>
</dbReference>
<dbReference type="IntAct" id="Q99321">
    <property type="interactions" value="3"/>
</dbReference>
<dbReference type="STRING" id="4932.YOR163W"/>
<dbReference type="iPTMnet" id="Q99321"/>
<dbReference type="PaxDb" id="4932-YOR163W"/>
<dbReference type="PeptideAtlas" id="Q99321"/>
<dbReference type="EnsemblFungi" id="YOR163W_mRNA">
    <property type="protein sequence ID" value="YOR163W"/>
    <property type="gene ID" value="YOR163W"/>
</dbReference>
<dbReference type="GeneID" id="854334"/>
<dbReference type="KEGG" id="sce:YOR163W"/>
<dbReference type="AGR" id="SGD:S000005689"/>
<dbReference type="SGD" id="S000005689">
    <property type="gene designation" value="DDP1"/>
</dbReference>
<dbReference type="VEuPathDB" id="FungiDB:YOR163W"/>
<dbReference type="eggNOG" id="KOG2839">
    <property type="taxonomic scope" value="Eukaryota"/>
</dbReference>
<dbReference type="HOGENOM" id="CLU_037162_5_3_1"/>
<dbReference type="InParanoid" id="Q99321"/>
<dbReference type="OMA" id="EDQWPEM"/>
<dbReference type="OrthoDB" id="2011998at2759"/>
<dbReference type="BioCyc" id="YEAST:YOR163W-MONOMER"/>
<dbReference type="BRENDA" id="3.6.1.10">
    <property type="organism ID" value="984"/>
</dbReference>
<dbReference type="BRENDA" id="3.6.1.52">
    <property type="organism ID" value="984"/>
</dbReference>
<dbReference type="BRENDA" id="3.6.1.60">
    <property type="organism ID" value="984"/>
</dbReference>
<dbReference type="Reactome" id="R-SCE-1855167">
    <property type="pathway name" value="Synthesis of pyrophosphates in the cytosol"/>
</dbReference>
<dbReference type="SABIO-RK" id="Q99321"/>
<dbReference type="BioGRID-ORCS" id="854334">
    <property type="hits" value="4 hits in 10 CRISPR screens"/>
</dbReference>
<dbReference type="PRO" id="PR:Q99321"/>
<dbReference type="Proteomes" id="UP000002311">
    <property type="component" value="Chromosome XV"/>
</dbReference>
<dbReference type="RNAct" id="Q99321">
    <property type="molecule type" value="protein"/>
</dbReference>
<dbReference type="GO" id="GO:0005737">
    <property type="term" value="C:cytoplasm"/>
    <property type="evidence" value="ECO:0007005"/>
    <property type="project" value="SGD"/>
</dbReference>
<dbReference type="GO" id="GO:0005634">
    <property type="term" value="C:nucleus"/>
    <property type="evidence" value="ECO:0007005"/>
    <property type="project" value="SGD"/>
</dbReference>
<dbReference type="GO" id="GO:0034431">
    <property type="term" value="F:bis(5'-adenosyl)-hexaphosphatase activity"/>
    <property type="evidence" value="ECO:0000314"/>
    <property type="project" value="SGD"/>
</dbReference>
<dbReference type="GO" id="GO:0034432">
    <property type="term" value="F:bis(5'-adenosyl)-pentaphosphatase activity"/>
    <property type="evidence" value="ECO:0000314"/>
    <property type="project" value="SGD"/>
</dbReference>
<dbReference type="GO" id="GO:0008486">
    <property type="term" value="F:diphosphoinositol-polyphosphate diphosphatase activity"/>
    <property type="evidence" value="ECO:0000314"/>
    <property type="project" value="SGD"/>
</dbReference>
<dbReference type="GO" id="GO:0000298">
    <property type="term" value="F:endopolyphosphatase activity"/>
    <property type="evidence" value="ECO:0000314"/>
    <property type="project" value="SGD"/>
</dbReference>
<dbReference type="GO" id="GO:0046872">
    <property type="term" value="F:metal ion binding"/>
    <property type="evidence" value="ECO:0007669"/>
    <property type="project" value="UniProtKB-KW"/>
</dbReference>
<dbReference type="GO" id="GO:1990174">
    <property type="term" value="F:phosphodiesterase decapping endonuclease activity"/>
    <property type="evidence" value="ECO:0000314"/>
    <property type="project" value="SGD"/>
</dbReference>
<dbReference type="GO" id="GO:1901911">
    <property type="term" value="P:adenosine 5'-(hexahydrogen pentaphosphate) catabolic process"/>
    <property type="evidence" value="ECO:0000318"/>
    <property type="project" value="GO_Central"/>
</dbReference>
<dbReference type="GO" id="GO:1901909">
    <property type="term" value="P:diadenosine hexaphosphate catabolic process"/>
    <property type="evidence" value="ECO:0000318"/>
    <property type="project" value="GO_Central"/>
</dbReference>
<dbReference type="GO" id="GO:1901907">
    <property type="term" value="P:diadenosine pentaphosphate catabolic process"/>
    <property type="evidence" value="ECO:0000318"/>
    <property type="project" value="GO_Central"/>
</dbReference>
<dbReference type="GO" id="GO:0015961">
    <property type="term" value="P:diadenosine polyphosphate catabolic process"/>
    <property type="evidence" value="ECO:0000314"/>
    <property type="project" value="SGD"/>
</dbReference>
<dbReference type="GO" id="GO:0071543">
    <property type="term" value="P:diphosphoinositol polyphosphate metabolic process"/>
    <property type="evidence" value="ECO:0000318"/>
    <property type="project" value="GO_Central"/>
</dbReference>
<dbReference type="GO" id="GO:0006798">
    <property type="term" value="P:polyphosphate catabolic process"/>
    <property type="evidence" value="ECO:0000314"/>
    <property type="project" value="SGD"/>
</dbReference>
<dbReference type="CDD" id="cd04666">
    <property type="entry name" value="NUDIX_DIPP2_like_Nudt4"/>
    <property type="match status" value="1"/>
</dbReference>
<dbReference type="FunFam" id="3.90.79.10:FF:000066">
    <property type="entry name" value="DDP1p Polyphosphate phosphatase"/>
    <property type="match status" value="1"/>
</dbReference>
<dbReference type="Gene3D" id="3.90.79.10">
    <property type="entry name" value="Nucleoside Triphosphate Pyrophosphohydrolase"/>
    <property type="match status" value="1"/>
</dbReference>
<dbReference type="InterPro" id="IPR047198">
    <property type="entry name" value="DDP-like_NUDIX"/>
</dbReference>
<dbReference type="InterPro" id="IPR015797">
    <property type="entry name" value="NUDIX_hydrolase-like_dom_sf"/>
</dbReference>
<dbReference type="InterPro" id="IPR000086">
    <property type="entry name" value="NUDIX_hydrolase_dom"/>
</dbReference>
<dbReference type="PANTHER" id="PTHR12629">
    <property type="entry name" value="DIPHOSPHOINOSITOL POLYPHOSPHATE PHOSPHOHYDROLASE"/>
    <property type="match status" value="1"/>
</dbReference>
<dbReference type="PANTHER" id="PTHR12629:SF0">
    <property type="entry name" value="DIPHOSPHOINOSITOL-POLYPHOSPHATE DIPHOSPHATASE"/>
    <property type="match status" value="1"/>
</dbReference>
<dbReference type="Pfam" id="PF00293">
    <property type="entry name" value="NUDIX"/>
    <property type="match status" value="1"/>
</dbReference>
<dbReference type="SUPFAM" id="SSF55811">
    <property type="entry name" value="Nudix"/>
    <property type="match status" value="1"/>
</dbReference>
<dbReference type="PROSITE" id="PS51462">
    <property type="entry name" value="NUDIX"/>
    <property type="match status" value="1"/>
</dbReference>
<evidence type="ECO:0000250" key="1">
    <source>
        <dbReference type="UniProtKB" id="O95989"/>
    </source>
</evidence>
<evidence type="ECO:0000255" key="2">
    <source>
        <dbReference type="PROSITE-ProRule" id="PRU00794"/>
    </source>
</evidence>
<evidence type="ECO:0000256" key="3">
    <source>
        <dbReference type="SAM" id="MobiDB-lite"/>
    </source>
</evidence>
<evidence type="ECO:0000269" key="4">
    <source>
    </source>
</evidence>
<evidence type="ECO:0000269" key="5">
    <source>
    </source>
</evidence>
<evidence type="ECO:0000269" key="6">
    <source>
    </source>
</evidence>
<evidence type="ECO:0000269" key="7">
    <source>
    </source>
</evidence>
<evidence type="ECO:0000269" key="8">
    <source>
    </source>
</evidence>
<evidence type="ECO:0000269" key="9">
    <source>
    </source>
</evidence>
<evidence type="ECO:0000305" key="10"/>
<evidence type="ECO:0000305" key="11">
    <source>
    </source>
</evidence>
<evidence type="ECO:0007744" key="12">
    <source>
        <dbReference type="PDB" id="7AUI"/>
    </source>
</evidence>
<evidence type="ECO:0007744" key="13">
    <source>
        <dbReference type="PDB" id="7AUK"/>
    </source>
</evidence>
<evidence type="ECO:0007744" key="14">
    <source>
        <dbReference type="PDB" id="7AUL"/>
    </source>
</evidence>
<evidence type="ECO:0007744" key="15">
    <source>
        <dbReference type="PDB" id="7AUP"/>
    </source>
</evidence>
<evidence type="ECO:0007744" key="16">
    <source>
        <dbReference type="PDB" id="7AUQ"/>
    </source>
</evidence>
<evidence type="ECO:0007744" key="17">
    <source>
        <dbReference type="PDB" id="7AUR"/>
    </source>
</evidence>
<evidence type="ECO:0007829" key="18">
    <source>
        <dbReference type="PDB" id="7AUR"/>
    </source>
</evidence>
<evidence type="ECO:0007829" key="19">
    <source>
        <dbReference type="PDB" id="7AUT"/>
    </source>
</evidence>
<keyword id="KW-0002">3D-structure</keyword>
<keyword id="KW-0963">Cytoplasm</keyword>
<keyword id="KW-0903">Direct protein sequencing</keyword>
<keyword id="KW-0378">Hydrolase</keyword>
<keyword id="KW-0460">Magnesium</keyword>
<keyword id="KW-0479">Metal-binding</keyword>
<keyword id="KW-0539">Nucleus</keyword>
<keyword id="KW-1185">Reference proteome</keyword>
<organism>
    <name type="scientific">Saccharomyces cerevisiae (strain ATCC 204508 / S288c)</name>
    <name type="common">Baker's yeast</name>
    <dbReference type="NCBI Taxonomy" id="559292"/>
    <lineage>
        <taxon>Eukaryota</taxon>
        <taxon>Fungi</taxon>
        <taxon>Dikarya</taxon>
        <taxon>Ascomycota</taxon>
        <taxon>Saccharomycotina</taxon>
        <taxon>Saccharomycetes</taxon>
        <taxon>Saccharomycetales</taxon>
        <taxon>Saccharomycetaceae</taxon>
        <taxon>Saccharomyces</taxon>
    </lineage>
</organism>